<protein>
    <recommendedName>
        <fullName>Saccharopine dehydrogenase [NAD(+), L-lysine-forming]</fullName>
        <shortName>SDH</shortName>
        <ecNumber>1.5.1.7</ecNumber>
    </recommendedName>
    <alternativeName>
        <fullName>Lysine--2-oxoglutarate reductase</fullName>
    </alternativeName>
</protein>
<comment type="function">
    <text evidence="1">Catalyzes the NAD(+)-dependent cleavage of saccharopine to L-lysine and 2-oxoglutarate, the final step in the alpha-aminoadipate (AAA) pathway for lysin biosynthesis.</text>
</comment>
<comment type="catalytic activity">
    <reaction evidence="1">
        <text>L-saccharopine + NAD(+) + H2O = L-lysine + 2-oxoglutarate + NADH + H(+)</text>
        <dbReference type="Rhea" id="RHEA:12440"/>
        <dbReference type="ChEBI" id="CHEBI:15377"/>
        <dbReference type="ChEBI" id="CHEBI:15378"/>
        <dbReference type="ChEBI" id="CHEBI:16810"/>
        <dbReference type="ChEBI" id="CHEBI:32551"/>
        <dbReference type="ChEBI" id="CHEBI:57540"/>
        <dbReference type="ChEBI" id="CHEBI:57945"/>
        <dbReference type="ChEBI" id="CHEBI:57951"/>
        <dbReference type="EC" id="1.5.1.7"/>
    </reaction>
</comment>
<comment type="pathway">
    <text evidence="4">Amino-acid biosynthesis; L-lysine biosynthesis via AAA pathway; L-lysine from L-alpha-aminoadipate (fungal route): step 3/3.</text>
</comment>
<comment type="subunit">
    <text evidence="1">Monomer.</text>
</comment>
<comment type="similarity">
    <text evidence="3">Belongs to the AlaDH/PNT family.</text>
</comment>
<comment type="sequence caution">
    <conflict type="miscellaneous discrepancy">
        <sequence resource="EMBL-CDS" id="AOW29271"/>
    </conflict>
    <text>The coordinates of this ORF in the reference genome reflect non-intron adjustments made to compensate for presumed sequencing errors.</text>
</comment>
<organism>
    <name type="scientific">Candida albicans (strain SC5314 / ATCC MYA-2876)</name>
    <name type="common">Yeast</name>
    <dbReference type="NCBI Taxonomy" id="237561"/>
    <lineage>
        <taxon>Eukaryota</taxon>
        <taxon>Fungi</taxon>
        <taxon>Dikarya</taxon>
        <taxon>Ascomycota</taxon>
        <taxon>Saccharomycotina</taxon>
        <taxon>Pichiomycetes</taxon>
        <taxon>Debaryomycetaceae</taxon>
        <taxon>Candida/Lodderomyces clade</taxon>
        <taxon>Candida</taxon>
    </lineage>
</organism>
<reference key="1">
    <citation type="journal article" date="1994" name="Infect. Immun.">
        <title>Molecular and functional analysis of the LYS1 gene of Candida albicans.</title>
        <authorList>
            <person name="Garrad R.C."/>
            <person name="Schmidt T.M."/>
            <person name="Bhattacharjee J.K."/>
        </authorList>
    </citation>
    <scope>NUCLEOTIDE SEQUENCE [GENOMIC DNA]</scope>
    <scope>FUNCTION</scope>
    <scope>PATHWAY</scope>
</reference>
<reference key="2">
    <citation type="journal article" date="2004" name="Proc. Natl. Acad. Sci. U.S.A.">
        <title>The diploid genome sequence of Candida albicans.</title>
        <authorList>
            <person name="Jones T."/>
            <person name="Federspiel N.A."/>
            <person name="Chibana H."/>
            <person name="Dungan J."/>
            <person name="Kalman S."/>
            <person name="Magee B.B."/>
            <person name="Newport G."/>
            <person name="Thorstenson Y.R."/>
            <person name="Agabian N."/>
            <person name="Magee P.T."/>
            <person name="Davis R.W."/>
            <person name="Scherer S."/>
        </authorList>
    </citation>
    <scope>NUCLEOTIDE SEQUENCE [LARGE SCALE GENOMIC DNA]</scope>
    <source>
        <strain>SC5314 / ATCC MYA-2876</strain>
    </source>
</reference>
<reference key="3">
    <citation type="journal article" date="2007" name="Genome Biol.">
        <title>Assembly of the Candida albicans genome into sixteen supercontigs aligned on the eight chromosomes.</title>
        <authorList>
            <person name="van het Hoog M."/>
            <person name="Rast T.J."/>
            <person name="Martchenko M."/>
            <person name="Grindle S."/>
            <person name="Dignard D."/>
            <person name="Hogues H."/>
            <person name="Cuomo C."/>
            <person name="Berriman M."/>
            <person name="Scherer S."/>
            <person name="Magee B.B."/>
            <person name="Whiteway M."/>
            <person name="Chibana H."/>
            <person name="Nantel A."/>
            <person name="Magee P.T."/>
        </authorList>
    </citation>
    <scope>GENOME REANNOTATION</scope>
    <source>
        <strain>SC5314 / ATCC MYA-2876</strain>
    </source>
</reference>
<reference key="4">
    <citation type="journal article" date="2013" name="Genome Biol.">
        <title>Assembly of a phased diploid Candida albicans genome facilitates allele-specific measurements and provides a simple model for repeat and indel structure.</title>
        <authorList>
            <person name="Muzzey D."/>
            <person name="Schwartz K."/>
            <person name="Weissman J.S."/>
            <person name="Sherlock G."/>
        </authorList>
    </citation>
    <scope>NUCLEOTIDE SEQUENCE [LARGE SCALE GENOMIC DNA]</scope>
    <scope>GENOME REANNOTATION</scope>
    <source>
        <strain>SC5314 / ATCC MYA-2876</strain>
    </source>
</reference>
<dbReference type="EC" id="1.5.1.7"/>
<dbReference type="EMBL" id="U13233">
    <property type="protein sequence ID" value="AAA21362.1"/>
    <property type="molecule type" value="Genomic_DNA"/>
</dbReference>
<dbReference type="EMBL" id="CP017626">
    <property type="protein sequence ID" value="AOW29271.1"/>
    <property type="status" value="ALT_SEQ"/>
    <property type="molecule type" value="Genomic_DNA"/>
</dbReference>
<dbReference type="RefSeq" id="XP_443225.2">
    <property type="nucleotide sequence ID" value="XM_443225.2"/>
</dbReference>
<dbReference type="SMR" id="P43065"/>
<dbReference type="FunCoup" id="P43065">
    <property type="interactions" value="210"/>
</dbReference>
<dbReference type="STRING" id="237561.P43065"/>
<dbReference type="PeptideAtlas" id="P43065"/>
<dbReference type="GeneID" id="6335429"/>
<dbReference type="KEGG" id="cal:CAALFM_C405320WA"/>
<dbReference type="eggNOG" id="KOG0172">
    <property type="taxonomic scope" value="Eukaryota"/>
</dbReference>
<dbReference type="InParanoid" id="P43065"/>
<dbReference type="OMA" id="YFFFSHT"/>
<dbReference type="OrthoDB" id="265306at2759"/>
<dbReference type="UniPathway" id="UPA00033">
    <property type="reaction ID" value="UER00034"/>
</dbReference>
<dbReference type="Proteomes" id="UP000000559">
    <property type="component" value="Chromosome 4"/>
</dbReference>
<dbReference type="GO" id="GO:0005737">
    <property type="term" value="C:cytoplasm"/>
    <property type="evidence" value="ECO:0000318"/>
    <property type="project" value="GO_Central"/>
</dbReference>
<dbReference type="GO" id="GO:0004754">
    <property type="term" value="F:saccharopine dehydrogenase (NAD+, L-lysine-forming) activity"/>
    <property type="evidence" value="ECO:0007669"/>
    <property type="project" value="UniProtKB-EC"/>
</dbReference>
<dbReference type="GO" id="GO:0004753">
    <property type="term" value="F:saccharopine dehydrogenase activity"/>
    <property type="evidence" value="ECO:0000318"/>
    <property type="project" value="GO_Central"/>
</dbReference>
<dbReference type="GO" id="GO:0019878">
    <property type="term" value="P:lysine biosynthetic process via aminoadipic acid"/>
    <property type="evidence" value="ECO:0000318"/>
    <property type="project" value="GO_Central"/>
</dbReference>
<dbReference type="CDD" id="cd12188">
    <property type="entry name" value="SDH"/>
    <property type="match status" value="1"/>
</dbReference>
<dbReference type="FunFam" id="3.40.50.720:FF:000217">
    <property type="entry name" value="Saccharopine dehydrogenase [NAD(+), L-lysine-forming]"/>
    <property type="match status" value="1"/>
</dbReference>
<dbReference type="FunFam" id="3.40.50.720:FF:000423">
    <property type="entry name" value="Saccharopine dehydrogenase [NAD(+), L-lysine-forming]"/>
    <property type="match status" value="1"/>
</dbReference>
<dbReference type="Gene3D" id="3.40.50.720">
    <property type="entry name" value="NAD(P)-binding Rossmann-like Domain"/>
    <property type="match status" value="2"/>
</dbReference>
<dbReference type="InterPro" id="IPR051168">
    <property type="entry name" value="AASS"/>
</dbReference>
<dbReference type="InterPro" id="IPR007886">
    <property type="entry name" value="AlaDH/PNT_N"/>
</dbReference>
<dbReference type="InterPro" id="IPR007698">
    <property type="entry name" value="AlaDH/PNT_NAD(H)-bd"/>
</dbReference>
<dbReference type="InterPro" id="IPR027281">
    <property type="entry name" value="Lys1"/>
</dbReference>
<dbReference type="InterPro" id="IPR036291">
    <property type="entry name" value="NAD(P)-bd_dom_sf"/>
</dbReference>
<dbReference type="PANTHER" id="PTHR11133">
    <property type="entry name" value="SACCHAROPINE DEHYDROGENASE"/>
    <property type="match status" value="1"/>
</dbReference>
<dbReference type="PANTHER" id="PTHR11133:SF23">
    <property type="entry name" value="SACCHAROPINE DEHYDROGENASE [NAD(+), L-LYSINE-FORMING]"/>
    <property type="match status" value="1"/>
</dbReference>
<dbReference type="Pfam" id="PF05222">
    <property type="entry name" value="AlaDh_PNT_N"/>
    <property type="match status" value="1"/>
</dbReference>
<dbReference type="PIRSF" id="PIRSF018250">
    <property type="entry name" value="Saccharopine_DH_Lys"/>
    <property type="match status" value="1"/>
</dbReference>
<dbReference type="SMART" id="SM01002">
    <property type="entry name" value="AlaDh_PNT_C"/>
    <property type="match status" value="1"/>
</dbReference>
<dbReference type="SMART" id="SM01003">
    <property type="entry name" value="AlaDh_PNT_N"/>
    <property type="match status" value="1"/>
</dbReference>
<dbReference type="SUPFAM" id="SSF52283">
    <property type="entry name" value="Formate/glycerate dehydrogenase catalytic domain-like"/>
    <property type="match status" value="1"/>
</dbReference>
<dbReference type="SUPFAM" id="SSF51735">
    <property type="entry name" value="NAD(P)-binding Rossmann-fold domains"/>
    <property type="match status" value="1"/>
</dbReference>
<evidence type="ECO:0000250" key="1">
    <source>
        <dbReference type="UniProtKB" id="P38998"/>
    </source>
</evidence>
<evidence type="ECO:0000303" key="2">
    <source>
    </source>
</evidence>
<evidence type="ECO:0000305" key="3"/>
<evidence type="ECO:0000305" key="4">
    <source>
    </source>
</evidence>
<name>LYS1_CANAL</name>
<gene>
    <name evidence="2" type="primary">LYS1</name>
    <name type="ordered locus">CAALFM_C405320WA</name>
    <name type="ORF">orf19.1789.1</name>
</gene>
<feature type="chain" id="PRO_0000199010" description="Saccharopine dehydrogenase [NAD(+), L-lysine-forming]">
    <location>
        <begin position="1"/>
        <end position="382"/>
    </location>
</feature>
<feature type="active site" description="Proton acceptor" evidence="1">
    <location>
        <position position="79"/>
    </location>
</feature>
<feature type="active site" description="Proton donor" evidence="1">
    <location>
        <position position="98"/>
    </location>
</feature>
<feature type="binding site" evidence="1">
    <location>
        <position position="20"/>
    </location>
    <ligand>
        <name>L-saccharopine</name>
        <dbReference type="ChEBI" id="CHEBI:57951"/>
    </ligand>
</feature>
<feature type="binding site" evidence="1">
    <location>
        <position position="79"/>
    </location>
    <ligand>
        <name>L-saccharopine</name>
        <dbReference type="ChEBI" id="CHEBI:57951"/>
    </ligand>
</feature>
<feature type="binding site" evidence="1">
    <location>
        <position position="103"/>
    </location>
    <ligand>
        <name>L-saccharopine</name>
        <dbReference type="ChEBI" id="CHEBI:57951"/>
    </ligand>
</feature>
<feature type="binding site" evidence="1">
    <location>
        <position position="132"/>
    </location>
    <ligand>
        <name>NAD(+)</name>
        <dbReference type="ChEBI" id="CHEBI:57540"/>
    </ligand>
</feature>
<feature type="binding site" evidence="1">
    <location>
        <position position="133"/>
    </location>
    <ligand>
        <name>L-saccharopine</name>
        <dbReference type="ChEBI" id="CHEBI:57951"/>
    </ligand>
</feature>
<feature type="binding site" evidence="1">
    <location>
        <position position="137"/>
    </location>
    <ligand>
        <name>L-saccharopine</name>
        <dbReference type="ChEBI" id="CHEBI:57951"/>
    </ligand>
</feature>
<feature type="binding site" evidence="1">
    <location>
        <begin position="215"/>
        <end position="216"/>
    </location>
    <ligand>
        <name>NAD(+)</name>
        <dbReference type="ChEBI" id="CHEBI:57540"/>
    </ligand>
</feature>
<feature type="binding site" evidence="1">
    <location>
        <position position="239"/>
    </location>
    <ligand>
        <name>NAD(+)</name>
        <dbReference type="ChEBI" id="CHEBI:57540"/>
    </ligand>
</feature>
<feature type="binding site" evidence="1">
    <location>
        <position position="243"/>
    </location>
    <ligand>
        <name>NAD(+)</name>
        <dbReference type="ChEBI" id="CHEBI:57540"/>
    </ligand>
</feature>
<feature type="binding site" evidence="1">
    <location>
        <position position="263"/>
    </location>
    <ligand>
        <name>NAD(+)</name>
        <dbReference type="ChEBI" id="CHEBI:57540"/>
    </ligand>
</feature>
<feature type="binding site" evidence="1">
    <location>
        <position position="290"/>
    </location>
    <ligand>
        <name>NAD(+)</name>
        <dbReference type="ChEBI" id="CHEBI:57540"/>
    </ligand>
</feature>
<feature type="binding site" evidence="1">
    <location>
        <begin position="291"/>
        <end position="293"/>
    </location>
    <ligand>
        <name>L-saccharopine</name>
        <dbReference type="ChEBI" id="CHEBI:57951"/>
    </ligand>
</feature>
<feature type="binding site" evidence="1">
    <location>
        <begin position="330"/>
        <end position="333"/>
    </location>
    <ligand>
        <name>NAD(+)</name>
        <dbReference type="ChEBI" id="CHEBI:57540"/>
    </ligand>
</feature>
<feature type="disulfide bond" evidence="1">
    <location>
        <begin position="217"/>
        <end position="261"/>
    </location>
</feature>
<keyword id="KW-0028">Amino-acid biosynthesis</keyword>
<keyword id="KW-1015">Disulfide bond</keyword>
<keyword id="KW-0457">Lysine biosynthesis</keyword>
<keyword id="KW-0520">NAD</keyword>
<keyword id="KW-0560">Oxidoreductase</keyword>
<keyword id="KW-1185">Reference proteome</keyword>
<accession>P43065</accession>
<accession>A0A1D8PMA1</accession>
<proteinExistence type="inferred from homology"/>
<sequence length="382" mass="42394">MSKSPVILHLRAETKPLEARAALTPSTTKQLLDAGFEIYVEESSQSTFDIKEYEAVGAKIVPEGSWKTAPKERIIFGLKELPENETFPLIHEHIQFAHCYKDQAGWQDVLKRFPQGNGILYDLEFLENDQGRRVAAFGFYAGFAGAAIGVLDWSFKQLNGNTKGTKGEGEGGELPGVTPYPNENELIKDVKIELEKALTKNGGQYPKCLVIGALGRCGSGAIDLFKKIGIPDDNIAKWDMAETAKGGPFQEIVDSDIFINCIYLSKPIPPFINKEILNNENRKLTTIVDVSADTTNPHNPIPVYEIATVFNEPTVEVKLDKGPKLSVCSIDHLPSLLPREASEFFAKDLMPSLLELPNRDTSPVWVRAKQLFDKHVARLDKE</sequence>